<comment type="function">
    <text evidence="1">Nucleotide-binding protein.</text>
</comment>
<comment type="similarity">
    <text evidence="1">Belongs to the YajQ family.</text>
</comment>
<feature type="chain" id="PRO_1000147324" description="Nucleotide-binding protein Sbal223_3532">
    <location>
        <begin position="1"/>
        <end position="161"/>
    </location>
</feature>
<evidence type="ECO:0000255" key="1">
    <source>
        <dbReference type="HAMAP-Rule" id="MF_00632"/>
    </source>
</evidence>
<protein>
    <recommendedName>
        <fullName evidence="1">Nucleotide-binding protein Sbal223_3532</fullName>
    </recommendedName>
</protein>
<accession>B8E801</accession>
<sequence>MPSMDIVSEVNEVELRNAVDNTKRELATRFDFRGKTADVEYKDHVVTLTAEDDFQCQQLVDILRMQLSKRNVDPSSMEVDEKAIHSGKTFSLKVKFKEGIETLIAKKLVKLIKDSKLKVQASIQGEKVRVTGKKRDDLQAVMALARESELGQPFQFDNFKD</sequence>
<dbReference type="EMBL" id="CP001252">
    <property type="protein sequence ID" value="ACK48014.1"/>
    <property type="molecule type" value="Genomic_DNA"/>
</dbReference>
<dbReference type="RefSeq" id="WP_006080274.1">
    <property type="nucleotide sequence ID" value="NC_011663.1"/>
</dbReference>
<dbReference type="SMR" id="B8E801"/>
<dbReference type="KEGG" id="sbp:Sbal223_3532"/>
<dbReference type="HOGENOM" id="CLU_099839_1_0_6"/>
<dbReference type="Proteomes" id="UP000002507">
    <property type="component" value="Chromosome"/>
</dbReference>
<dbReference type="GO" id="GO:0005829">
    <property type="term" value="C:cytosol"/>
    <property type="evidence" value="ECO:0007669"/>
    <property type="project" value="TreeGrafter"/>
</dbReference>
<dbReference type="GO" id="GO:0000166">
    <property type="term" value="F:nucleotide binding"/>
    <property type="evidence" value="ECO:0007669"/>
    <property type="project" value="TreeGrafter"/>
</dbReference>
<dbReference type="CDD" id="cd11740">
    <property type="entry name" value="YajQ_like"/>
    <property type="match status" value="1"/>
</dbReference>
<dbReference type="FunFam" id="3.30.70.860:FF:000001">
    <property type="entry name" value="UPF0234 protein YajQ"/>
    <property type="match status" value="1"/>
</dbReference>
<dbReference type="Gene3D" id="3.30.70.860">
    <property type="match status" value="1"/>
</dbReference>
<dbReference type="Gene3D" id="3.30.70.990">
    <property type="entry name" value="YajQ-like, domain 2"/>
    <property type="match status" value="1"/>
</dbReference>
<dbReference type="HAMAP" id="MF_00632">
    <property type="entry name" value="YajQ"/>
    <property type="match status" value="1"/>
</dbReference>
<dbReference type="InterPro" id="IPR007551">
    <property type="entry name" value="DUF520"/>
</dbReference>
<dbReference type="InterPro" id="IPR035571">
    <property type="entry name" value="UPF0234-like_C"/>
</dbReference>
<dbReference type="InterPro" id="IPR035570">
    <property type="entry name" value="UPF0234_N"/>
</dbReference>
<dbReference type="InterPro" id="IPR036183">
    <property type="entry name" value="YajQ-like_sf"/>
</dbReference>
<dbReference type="NCBIfam" id="NF003819">
    <property type="entry name" value="PRK05412.1"/>
    <property type="match status" value="1"/>
</dbReference>
<dbReference type="PANTHER" id="PTHR30476">
    <property type="entry name" value="UPF0234 PROTEIN YAJQ"/>
    <property type="match status" value="1"/>
</dbReference>
<dbReference type="PANTHER" id="PTHR30476:SF0">
    <property type="entry name" value="UPF0234 PROTEIN YAJQ"/>
    <property type="match status" value="1"/>
</dbReference>
<dbReference type="Pfam" id="PF04461">
    <property type="entry name" value="DUF520"/>
    <property type="match status" value="1"/>
</dbReference>
<dbReference type="SUPFAM" id="SSF89963">
    <property type="entry name" value="YajQ-like"/>
    <property type="match status" value="2"/>
</dbReference>
<name>Y3532_SHEB2</name>
<organism>
    <name type="scientific">Shewanella baltica (strain OS223)</name>
    <dbReference type="NCBI Taxonomy" id="407976"/>
    <lineage>
        <taxon>Bacteria</taxon>
        <taxon>Pseudomonadati</taxon>
        <taxon>Pseudomonadota</taxon>
        <taxon>Gammaproteobacteria</taxon>
        <taxon>Alteromonadales</taxon>
        <taxon>Shewanellaceae</taxon>
        <taxon>Shewanella</taxon>
    </lineage>
</organism>
<reference key="1">
    <citation type="submission" date="2008-12" db="EMBL/GenBank/DDBJ databases">
        <title>Complete sequence of chromosome of Shewanella baltica OS223.</title>
        <authorList>
            <consortium name="US DOE Joint Genome Institute"/>
            <person name="Lucas S."/>
            <person name="Copeland A."/>
            <person name="Lapidus A."/>
            <person name="Glavina del Rio T."/>
            <person name="Dalin E."/>
            <person name="Tice H."/>
            <person name="Bruce D."/>
            <person name="Goodwin L."/>
            <person name="Pitluck S."/>
            <person name="Chertkov O."/>
            <person name="Meincke L."/>
            <person name="Brettin T."/>
            <person name="Detter J.C."/>
            <person name="Han C."/>
            <person name="Kuske C.R."/>
            <person name="Larimer F."/>
            <person name="Land M."/>
            <person name="Hauser L."/>
            <person name="Kyrpides N."/>
            <person name="Ovchinnikova G."/>
            <person name="Brettar I."/>
            <person name="Rodrigues J."/>
            <person name="Konstantinidis K."/>
            <person name="Tiedje J."/>
        </authorList>
    </citation>
    <scope>NUCLEOTIDE SEQUENCE [LARGE SCALE GENOMIC DNA]</scope>
    <source>
        <strain>OS223</strain>
    </source>
</reference>
<proteinExistence type="inferred from homology"/>
<gene>
    <name type="ordered locus">Sbal223_3532</name>
</gene>
<keyword id="KW-0547">Nucleotide-binding</keyword>